<name>GCSH_SHIDS</name>
<sequence>MSNVPAELKYSKEHEWLRKEADGTYTVGITEHAQELLGDMVFVDLPEVGATVSAGDDCAVAESVKAASDIYAPVSGEIVAVNDVLSDSPELVNSEPYAGGWIFKIKASDESELESLLDATAYEALLEDE</sequence>
<comment type="function">
    <text evidence="1">The glycine cleavage system catalyzes the degradation of glycine. The H protein shuttles the methylamine group of glycine from the P protein to the T protein.</text>
</comment>
<comment type="cofactor">
    <cofactor evidence="1">
        <name>(R)-lipoate</name>
        <dbReference type="ChEBI" id="CHEBI:83088"/>
    </cofactor>
    <text evidence="1">Binds 1 lipoyl cofactor covalently.</text>
</comment>
<comment type="subunit">
    <text evidence="1">The glycine cleavage system is composed of four proteins: P, T, L and H.</text>
</comment>
<comment type="similarity">
    <text evidence="1">Belongs to the GcvH family.</text>
</comment>
<organism>
    <name type="scientific">Shigella dysenteriae serotype 1 (strain Sd197)</name>
    <dbReference type="NCBI Taxonomy" id="300267"/>
    <lineage>
        <taxon>Bacteria</taxon>
        <taxon>Pseudomonadati</taxon>
        <taxon>Pseudomonadota</taxon>
        <taxon>Gammaproteobacteria</taxon>
        <taxon>Enterobacterales</taxon>
        <taxon>Enterobacteriaceae</taxon>
        <taxon>Shigella</taxon>
    </lineage>
</organism>
<gene>
    <name evidence="1" type="primary">gcvH</name>
    <name type="ordered locus">SDY_3177</name>
</gene>
<protein>
    <recommendedName>
        <fullName evidence="1">Glycine cleavage system H protein</fullName>
    </recommendedName>
</protein>
<keyword id="KW-0450">Lipoyl</keyword>
<keyword id="KW-1185">Reference proteome</keyword>
<reference key="1">
    <citation type="journal article" date="2005" name="Nucleic Acids Res.">
        <title>Genome dynamics and diversity of Shigella species, the etiologic agents of bacillary dysentery.</title>
        <authorList>
            <person name="Yang F."/>
            <person name="Yang J."/>
            <person name="Zhang X."/>
            <person name="Chen L."/>
            <person name="Jiang Y."/>
            <person name="Yan Y."/>
            <person name="Tang X."/>
            <person name="Wang J."/>
            <person name="Xiong Z."/>
            <person name="Dong J."/>
            <person name="Xue Y."/>
            <person name="Zhu Y."/>
            <person name="Xu X."/>
            <person name="Sun L."/>
            <person name="Chen S."/>
            <person name="Nie H."/>
            <person name="Peng J."/>
            <person name="Xu J."/>
            <person name="Wang Y."/>
            <person name="Yuan Z."/>
            <person name="Wen Y."/>
            <person name="Yao Z."/>
            <person name="Shen Y."/>
            <person name="Qiang B."/>
            <person name="Hou Y."/>
            <person name="Yu J."/>
            <person name="Jin Q."/>
        </authorList>
    </citation>
    <scope>NUCLEOTIDE SEQUENCE [LARGE SCALE GENOMIC DNA]</scope>
    <source>
        <strain>Sd197</strain>
    </source>
</reference>
<proteinExistence type="inferred from homology"/>
<feature type="chain" id="PRO_0000302438" description="Glycine cleavage system H protein">
    <location>
        <begin position="1"/>
        <end position="129"/>
    </location>
</feature>
<feature type="domain" description="Lipoyl-binding" evidence="2">
    <location>
        <begin position="24"/>
        <end position="106"/>
    </location>
</feature>
<feature type="modified residue" description="N6-lipoyllysine" evidence="1">
    <location>
        <position position="65"/>
    </location>
</feature>
<evidence type="ECO:0000255" key="1">
    <source>
        <dbReference type="HAMAP-Rule" id="MF_00272"/>
    </source>
</evidence>
<evidence type="ECO:0000255" key="2">
    <source>
        <dbReference type="PROSITE-ProRule" id="PRU01066"/>
    </source>
</evidence>
<dbReference type="EMBL" id="CP000034">
    <property type="protein sequence ID" value="ABB63189.1"/>
    <property type="molecule type" value="Genomic_DNA"/>
</dbReference>
<dbReference type="RefSeq" id="WP_001307993.1">
    <property type="nucleotide sequence ID" value="NC_007606.1"/>
</dbReference>
<dbReference type="RefSeq" id="YP_404680.1">
    <property type="nucleotide sequence ID" value="NC_007606.1"/>
</dbReference>
<dbReference type="SMR" id="Q32BW6"/>
<dbReference type="STRING" id="300267.SDY_3177"/>
<dbReference type="EnsemblBacteria" id="ABB63189">
    <property type="protein sequence ID" value="ABB63189"/>
    <property type="gene ID" value="SDY_3177"/>
</dbReference>
<dbReference type="KEGG" id="sdy:SDY_3177"/>
<dbReference type="PATRIC" id="fig|300267.13.peg.3795"/>
<dbReference type="HOGENOM" id="CLU_097408_2_1_6"/>
<dbReference type="Proteomes" id="UP000002716">
    <property type="component" value="Chromosome"/>
</dbReference>
<dbReference type="GO" id="GO:0005829">
    <property type="term" value="C:cytosol"/>
    <property type="evidence" value="ECO:0007669"/>
    <property type="project" value="TreeGrafter"/>
</dbReference>
<dbReference type="GO" id="GO:0005960">
    <property type="term" value="C:glycine cleavage complex"/>
    <property type="evidence" value="ECO:0007669"/>
    <property type="project" value="InterPro"/>
</dbReference>
<dbReference type="GO" id="GO:0019464">
    <property type="term" value="P:glycine decarboxylation via glycine cleavage system"/>
    <property type="evidence" value="ECO:0007669"/>
    <property type="project" value="UniProtKB-UniRule"/>
</dbReference>
<dbReference type="CDD" id="cd06848">
    <property type="entry name" value="GCS_H"/>
    <property type="match status" value="1"/>
</dbReference>
<dbReference type="FunFam" id="2.40.50.100:FF:000011">
    <property type="entry name" value="Glycine cleavage system H protein"/>
    <property type="match status" value="1"/>
</dbReference>
<dbReference type="Gene3D" id="2.40.50.100">
    <property type="match status" value="1"/>
</dbReference>
<dbReference type="HAMAP" id="MF_00272">
    <property type="entry name" value="GcvH"/>
    <property type="match status" value="1"/>
</dbReference>
<dbReference type="InterPro" id="IPR003016">
    <property type="entry name" value="2-oxoA_DH_lipoyl-BS"/>
</dbReference>
<dbReference type="InterPro" id="IPR000089">
    <property type="entry name" value="Biotin_lipoyl"/>
</dbReference>
<dbReference type="InterPro" id="IPR002930">
    <property type="entry name" value="GCV_H"/>
</dbReference>
<dbReference type="InterPro" id="IPR033753">
    <property type="entry name" value="GCV_H/Fam206"/>
</dbReference>
<dbReference type="InterPro" id="IPR017453">
    <property type="entry name" value="GCV_H_sub"/>
</dbReference>
<dbReference type="InterPro" id="IPR011053">
    <property type="entry name" value="Single_hybrid_motif"/>
</dbReference>
<dbReference type="NCBIfam" id="TIGR00527">
    <property type="entry name" value="gcvH"/>
    <property type="match status" value="1"/>
</dbReference>
<dbReference type="NCBIfam" id="NF002270">
    <property type="entry name" value="PRK01202.1"/>
    <property type="match status" value="1"/>
</dbReference>
<dbReference type="PANTHER" id="PTHR11715">
    <property type="entry name" value="GLYCINE CLEAVAGE SYSTEM H PROTEIN"/>
    <property type="match status" value="1"/>
</dbReference>
<dbReference type="PANTHER" id="PTHR11715:SF3">
    <property type="entry name" value="GLYCINE CLEAVAGE SYSTEM H PROTEIN-RELATED"/>
    <property type="match status" value="1"/>
</dbReference>
<dbReference type="Pfam" id="PF01597">
    <property type="entry name" value="GCV_H"/>
    <property type="match status" value="1"/>
</dbReference>
<dbReference type="SUPFAM" id="SSF51230">
    <property type="entry name" value="Single hybrid motif"/>
    <property type="match status" value="1"/>
</dbReference>
<dbReference type="PROSITE" id="PS50968">
    <property type="entry name" value="BIOTINYL_LIPOYL"/>
    <property type="match status" value="1"/>
</dbReference>
<dbReference type="PROSITE" id="PS00189">
    <property type="entry name" value="LIPOYL"/>
    <property type="match status" value="1"/>
</dbReference>
<accession>Q32BW6</accession>